<accession>Q5YPG4</accession>
<evidence type="ECO:0000250" key="1"/>
<evidence type="ECO:0000255" key="2">
    <source>
        <dbReference type="HAMAP-Rule" id="MF_00118"/>
    </source>
</evidence>
<evidence type="ECO:0000305" key="3"/>
<protein>
    <recommendedName>
        <fullName evidence="2">Elongation factor Tu</fullName>
        <shortName evidence="2">EF-Tu</shortName>
        <ecNumber evidence="2">3.6.5.3</ecNumber>
    </recommendedName>
</protein>
<proteinExistence type="inferred from homology"/>
<sequence>MAKAKFERTKPHVNIGTIGHVDHGKTTLTAAITKVLADKYPDLNQSFAFDQIDKAPEEKARGITINISHVEYQTEKRHYAHVDAPGHADYIKNMITGAAQMDGAILVVAATDGPMPQTREHVLLARQVGVPYILVALNKADMVDDEEILELVEMEVRELLAAQEFDEEAPVVRVSGLKALEGDPKWVKSVEDLMDAVDESIPDPVRETDKPFLMPIEDVFTITGRGTVVTGRVERGIINVNEEVEITGIRPETTKTTVTGIEMFRKLLDQGQAGDNVGLLIRGIKREDVERGQVVIKPGTTTPHTEFEGQAYILSKDEGGRHTPFFNNYRPQFYFRTTDVTGVVTLPEGTEMVMPGDNTEMSVKLIQPVAMEEGLRFAIREGGRTVGAGRVTKIIK</sequence>
<gene>
    <name evidence="2" type="primary">tuf</name>
    <name type="synonym">tufB</name>
    <name type="ordered locus">NFA_50750</name>
</gene>
<reference key="1">
    <citation type="journal article" date="2004" name="Proc. Natl. Acad. Sci. U.S.A.">
        <title>The complete genomic sequence of Nocardia farcinica IFM 10152.</title>
        <authorList>
            <person name="Ishikawa J."/>
            <person name="Yamashita A."/>
            <person name="Mikami Y."/>
            <person name="Hoshino Y."/>
            <person name="Kurita H."/>
            <person name="Hotta K."/>
            <person name="Shiba T."/>
            <person name="Hattori M."/>
        </authorList>
    </citation>
    <scope>NUCLEOTIDE SEQUENCE [LARGE SCALE GENOMIC DNA]</scope>
    <source>
        <strain>IFM 10152</strain>
    </source>
</reference>
<comment type="function">
    <text evidence="2">GTP hydrolase that promotes the GTP-dependent binding of aminoacyl-tRNA to the A-site of ribosomes during protein biosynthesis.</text>
</comment>
<comment type="catalytic activity">
    <reaction evidence="2">
        <text>GTP + H2O = GDP + phosphate + H(+)</text>
        <dbReference type="Rhea" id="RHEA:19669"/>
        <dbReference type="ChEBI" id="CHEBI:15377"/>
        <dbReference type="ChEBI" id="CHEBI:15378"/>
        <dbReference type="ChEBI" id="CHEBI:37565"/>
        <dbReference type="ChEBI" id="CHEBI:43474"/>
        <dbReference type="ChEBI" id="CHEBI:58189"/>
        <dbReference type="EC" id="3.6.5.3"/>
    </reaction>
    <physiologicalReaction direction="left-to-right" evidence="2">
        <dbReference type="Rhea" id="RHEA:19670"/>
    </physiologicalReaction>
</comment>
<comment type="subunit">
    <text evidence="2">Monomer.</text>
</comment>
<comment type="subcellular location">
    <subcellularLocation>
        <location evidence="2">Cytoplasm</location>
    </subcellularLocation>
</comment>
<comment type="similarity">
    <text evidence="2">Belongs to the TRAFAC class translation factor GTPase superfamily. Classic translation factor GTPase family. EF-Tu/EF-1A subfamily.</text>
</comment>
<comment type="sequence caution" evidence="3">
    <conflict type="erroneous initiation">
        <sequence resource="EMBL-CDS" id="BAD59927"/>
    </conflict>
</comment>
<keyword id="KW-0963">Cytoplasm</keyword>
<keyword id="KW-0251">Elongation factor</keyword>
<keyword id="KW-0342">GTP-binding</keyword>
<keyword id="KW-0378">Hydrolase</keyword>
<keyword id="KW-0460">Magnesium</keyword>
<keyword id="KW-0479">Metal-binding</keyword>
<keyword id="KW-0547">Nucleotide-binding</keyword>
<keyword id="KW-0648">Protein biosynthesis</keyword>
<keyword id="KW-1185">Reference proteome</keyword>
<organism>
    <name type="scientific">Nocardia farcinica (strain IFM 10152)</name>
    <dbReference type="NCBI Taxonomy" id="247156"/>
    <lineage>
        <taxon>Bacteria</taxon>
        <taxon>Bacillati</taxon>
        <taxon>Actinomycetota</taxon>
        <taxon>Actinomycetes</taxon>
        <taxon>Mycobacteriales</taxon>
        <taxon>Nocardiaceae</taxon>
        <taxon>Nocardia</taxon>
    </lineage>
</organism>
<feature type="chain" id="PRO_0000337448" description="Elongation factor Tu">
    <location>
        <begin position="1"/>
        <end position="396"/>
    </location>
</feature>
<feature type="domain" description="tr-type G">
    <location>
        <begin position="10"/>
        <end position="205"/>
    </location>
</feature>
<feature type="region of interest" description="G1" evidence="1">
    <location>
        <begin position="19"/>
        <end position="26"/>
    </location>
</feature>
<feature type="region of interest" description="G2" evidence="1">
    <location>
        <begin position="62"/>
        <end position="66"/>
    </location>
</feature>
<feature type="region of interest" description="G3" evidence="1">
    <location>
        <begin position="83"/>
        <end position="86"/>
    </location>
</feature>
<feature type="region of interest" description="G4" evidence="1">
    <location>
        <begin position="138"/>
        <end position="141"/>
    </location>
</feature>
<feature type="region of interest" description="G5" evidence="1">
    <location>
        <begin position="175"/>
        <end position="177"/>
    </location>
</feature>
<feature type="binding site" evidence="2">
    <location>
        <begin position="19"/>
        <end position="26"/>
    </location>
    <ligand>
        <name>GTP</name>
        <dbReference type="ChEBI" id="CHEBI:37565"/>
    </ligand>
</feature>
<feature type="binding site" evidence="2">
    <location>
        <position position="26"/>
    </location>
    <ligand>
        <name>Mg(2+)</name>
        <dbReference type="ChEBI" id="CHEBI:18420"/>
    </ligand>
</feature>
<feature type="binding site" evidence="2">
    <location>
        <begin position="83"/>
        <end position="87"/>
    </location>
    <ligand>
        <name>GTP</name>
        <dbReference type="ChEBI" id="CHEBI:37565"/>
    </ligand>
</feature>
<feature type="binding site" evidence="2">
    <location>
        <begin position="138"/>
        <end position="141"/>
    </location>
    <ligand>
        <name>GTP</name>
        <dbReference type="ChEBI" id="CHEBI:37565"/>
    </ligand>
</feature>
<dbReference type="EC" id="3.6.5.3" evidence="2"/>
<dbReference type="EMBL" id="AP006618">
    <property type="protein sequence ID" value="BAD59927.1"/>
    <property type="status" value="ALT_INIT"/>
    <property type="molecule type" value="Genomic_DNA"/>
</dbReference>
<dbReference type="RefSeq" id="WP_011211609.1">
    <property type="nucleotide sequence ID" value="NC_006361.1"/>
</dbReference>
<dbReference type="SMR" id="Q5YPG4"/>
<dbReference type="STRING" id="247156.NFA_50750"/>
<dbReference type="GeneID" id="61135651"/>
<dbReference type="KEGG" id="nfa:NFA_50750"/>
<dbReference type="eggNOG" id="COG0050">
    <property type="taxonomic scope" value="Bacteria"/>
</dbReference>
<dbReference type="HOGENOM" id="CLU_007265_0_1_11"/>
<dbReference type="OrthoDB" id="9803139at2"/>
<dbReference type="Proteomes" id="UP000006820">
    <property type="component" value="Chromosome"/>
</dbReference>
<dbReference type="GO" id="GO:0005829">
    <property type="term" value="C:cytosol"/>
    <property type="evidence" value="ECO:0007669"/>
    <property type="project" value="TreeGrafter"/>
</dbReference>
<dbReference type="GO" id="GO:0005525">
    <property type="term" value="F:GTP binding"/>
    <property type="evidence" value="ECO:0007669"/>
    <property type="project" value="UniProtKB-UniRule"/>
</dbReference>
<dbReference type="GO" id="GO:0003924">
    <property type="term" value="F:GTPase activity"/>
    <property type="evidence" value="ECO:0007669"/>
    <property type="project" value="InterPro"/>
</dbReference>
<dbReference type="GO" id="GO:0003746">
    <property type="term" value="F:translation elongation factor activity"/>
    <property type="evidence" value="ECO:0007669"/>
    <property type="project" value="UniProtKB-UniRule"/>
</dbReference>
<dbReference type="CDD" id="cd01884">
    <property type="entry name" value="EF_Tu"/>
    <property type="match status" value="1"/>
</dbReference>
<dbReference type="CDD" id="cd03697">
    <property type="entry name" value="EFTU_II"/>
    <property type="match status" value="1"/>
</dbReference>
<dbReference type="CDD" id="cd03707">
    <property type="entry name" value="EFTU_III"/>
    <property type="match status" value="1"/>
</dbReference>
<dbReference type="FunFam" id="2.40.30.10:FF:000001">
    <property type="entry name" value="Elongation factor Tu"/>
    <property type="match status" value="1"/>
</dbReference>
<dbReference type="FunFam" id="3.40.50.300:FF:000003">
    <property type="entry name" value="Elongation factor Tu"/>
    <property type="match status" value="1"/>
</dbReference>
<dbReference type="Gene3D" id="3.40.50.300">
    <property type="entry name" value="P-loop containing nucleotide triphosphate hydrolases"/>
    <property type="match status" value="1"/>
</dbReference>
<dbReference type="Gene3D" id="2.40.30.10">
    <property type="entry name" value="Translation factors"/>
    <property type="match status" value="2"/>
</dbReference>
<dbReference type="HAMAP" id="MF_00118_B">
    <property type="entry name" value="EF_Tu_B"/>
    <property type="match status" value="1"/>
</dbReference>
<dbReference type="InterPro" id="IPR041709">
    <property type="entry name" value="EF-Tu_GTP-bd"/>
</dbReference>
<dbReference type="InterPro" id="IPR050055">
    <property type="entry name" value="EF-Tu_GTPase"/>
</dbReference>
<dbReference type="InterPro" id="IPR004161">
    <property type="entry name" value="EFTu-like_2"/>
</dbReference>
<dbReference type="InterPro" id="IPR033720">
    <property type="entry name" value="EFTU_2"/>
</dbReference>
<dbReference type="InterPro" id="IPR031157">
    <property type="entry name" value="G_TR_CS"/>
</dbReference>
<dbReference type="InterPro" id="IPR027417">
    <property type="entry name" value="P-loop_NTPase"/>
</dbReference>
<dbReference type="InterPro" id="IPR005225">
    <property type="entry name" value="Small_GTP-bd"/>
</dbReference>
<dbReference type="InterPro" id="IPR000795">
    <property type="entry name" value="T_Tr_GTP-bd_dom"/>
</dbReference>
<dbReference type="InterPro" id="IPR009000">
    <property type="entry name" value="Transl_B-barrel_sf"/>
</dbReference>
<dbReference type="InterPro" id="IPR009001">
    <property type="entry name" value="Transl_elong_EF1A/Init_IF2_C"/>
</dbReference>
<dbReference type="InterPro" id="IPR004541">
    <property type="entry name" value="Transl_elong_EFTu/EF1A_bac/org"/>
</dbReference>
<dbReference type="InterPro" id="IPR004160">
    <property type="entry name" value="Transl_elong_EFTu/EF1A_C"/>
</dbReference>
<dbReference type="NCBIfam" id="TIGR00485">
    <property type="entry name" value="EF-Tu"/>
    <property type="match status" value="1"/>
</dbReference>
<dbReference type="NCBIfam" id="NF000766">
    <property type="entry name" value="PRK00049.1"/>
    <property type="match status" value="1"/>
</dbReference>
<dbReference type="NCBIfam" id="NF009372">
    <property type="entry name" value="PRK12735.1"/>
    <property type="match status" value="1"/>
</dbReference>
<dbReference type="NCBIfam" id="NF009373">
    <property type="entry name" value="PRK12736.1"/>
    <property type="match status" value="1"/>
</dbReference>
<dbReference type="NCBIfam" id="TIGR00231">
    <property type="entry name" value="small_GTP"/>
    <property type="match status" value="1"/>
</dbReference>
<dbReference type="PANTHER" id="PTHR43721:SF22">
    <property type="entry name" value="ELONGATION FACTOR TU, MITOCHONDRIAL"/>
    <property type="match status" value="1"/>
</dbReference>
<dbReference type="PANTHER" id="PTHR43721">
    <property type="entry name" value="ELONGATION FACTOR TU-RELATED"/>
    <property type="match status" value="1"/>
</dbReference>
<dbReference type="Pfam" id="PF00009">
    <property type="entry name" value="GTP_EFTU"/>
    <property type="match status" value="1"/>
</dbReference>
<dbReference type="Pfam" id="PF03144">
    <property type="entry name" value="GTP_EFTU_D2"/>
    <property type="match status" value="1"/>
</dbReference>
<dbReference type="Pfam" id="PF03143">
    <property type="entry name" value="GTP_EFTU_D3"/>
    <property type="match status" value="1"/>
</dbReference>
<dbReference type="PRINTS" id="PR00315">
    <property type="entry name" value="ELONGATNFCT"/>
</dbReference>
<dbReference type="SUPFAM" id="SSF50465">
    <property type="entry name" value="EF-Tu/eEF-1alpha/eIF2-gamma C-terminal domain"/>
    <property type="match status" value="1"/>
</dbReference>
<dbReference type="SUPFAM" id="SSF52540">
    <property type="entry name" value="P-loop containing nucleoside triphosphate hydrolases"/>
    <property type="match status" value="1"/>
</dbReference>
<dbReference type="SUPFAM" id="SSF50447">
    <property type="entry name" value="Translation proteins"/>
    <property type="match status" value="1"/>
</dbReference>
<dbReference type="PROSITE" id="PS00301">
    <property type="entry name" value="G_TR_1"/>
    <property type="match status" value="1"/>
</dbReference>
<dbReference type="PROSITE" id="PS51722">
    <property type="entry name" value="G_TR_2"/>
    <property type="match status" value="1"/>
</dbReference>
<name>EFTU_NOCFA</name>